<proteinExistence type="inferred from homology"/>
<accession>B4RJR9</accession>
<comment type="function">
    <text evidence="1">Activates KDO (a required 8-carbon sugar) for incorporation into bacterial lipopolysaccharide in Gram-negative bacteria.</text>
</comment>
<comment type="catalytic activity">
    <reaction evidence="1">
        <text>3-deoxy-alpha-D-manno-oct-2-ulosonate + CTP = CMP-3-deoxy-beta-D-manno-octulosonate + diphosphate</text>
        <dbReference type="Rhea" id="RHEA:23448"/>
        <dbReference type="ChEBI" id="CHEBI:33019"/>
        <dbReference type="ChEBI" id="CHEBI:37563"/>
        <dbReference type="ChEBI" id="CHEBI:85986"/>
        <dbReference type="ChEBI" id="CHEBI:85987"/>
        <dbReference type="EC" id="2.7.7.38"/>
    </reaction>
</comment>
<comment type="pathway">
    <text evidence="1">Nucleotide-sugar biosynthesis; CMP-3-deoxy-D-manno-octulosonate biosynthesis; CMP-3-deoxy-D-manno-octulosonate from 3-deoxy-D-manno-octulosonate and CTP: step 1/1.</text>
</comment>
<comment type="pathway">
    <text evidence="1">Bacterial outer membrane biogenesis; lipopolysaccharide biosynthesis.</text>
</comment>
<comment type="subcellular location">
    <subcellularLocation>
        <location evidence="1">Cytoplasm</location>
    </subcellularLocation>
</comment>
<comment type="similarity">
    <text evidence="1">Belongs to the KdsB family.</text>
</comment>
<sequence length="253" mass="27723">MTEFVVLIPARLDSSRLPGKALADIHGKPMVVRVAEQAAKSKAARVVVATDHPDIQTACQAHGIEVVMTSNRHESGTTRLAEAAAALKLPPHLIVVNVQGDEPLIAPELIDRTAEVLVENNVQMATAGHELHDFDELMNPNAVKVVLDKNGNAIYFSRAPIPYPRDAMRAGKREMPSETAVLRHIGIYAYRVGFLQRYAEMSVSPLETIESLEQLRVLWHGYPIAVETAKEAPAAGVDTQEDLDRVRAVFQTV</sequence>
<evidence type="ECO:0000255" key="1">
    <source>
        <dbReference type="HAMAP-Rule" id="MF_00057"/>
    </source>
</evidence>
<protein>
    <recommendedName>
        <fullName evidence="1">3-deoxy-manno-octulosonate cytidylyltransferase</fullName>
        <ecNumber evidence="1">2.7.7.38</ecNumber>
    </recommendedName>
    <alternativeName>
        <fullName evidence="1">CMP-2-keto-3-deoxyoctulosonic acid synthase</fullName>
        <shortName evidence="1">CKS</shortName>
        <shortName evidence="1">CMP-KDO synthase</shortName>
    </alternativeName>
</protein>
<reference key="1">
    <citation type="journal article" date="2008" name="J. Bacteriol.">
        <title>Complete genome sequence of Neisseria gonorrhoeae NCCP11945.</title>
        <authorList>
            <person name="Chung G.T."/>
            <person name="Yoo J.S."/>
            <person name="Oh H.B."/>
            <person name="Lee Y.S."/>
            <person name="Cha S.H."/>
            <person name="Kim S.J."/>
            <person name="Yoo C.K."/>
        </authorList>
    </citation>
    <scope>NUCLEOTIDE SEQUENCE [LARGE SCALE GENOMIC DNA]</scope>
    <source>
        <strain>NCCP11945</strain>
    </source>
</reference>
<organism>
    <name type="scientific">Neisseria gonorrhoeae (strain NCCP11945)</name>
    <dbReference type="NCBI Taxonomy" id="521006"/>
    <lineage>
        <taxon>Bacteria</taxon>
        <taxon>Pseudomonadati</taxon>
        <taxon>Pseudomonadota</taxon>
        <taxon>Betaproteobacteria</taxon>
        <taxon>Neisseriales</taxon>
        <taxon>Neisseriaceae</taxon>
        <taxon>Neisseria</taxon>
    </lineage>
</organism>
<dbReference type="EC" id="2.7.7.38" evidence="1"/>
<dbReference type="EMBL" id="CP001050">
    <property type="protein sequence ID" value="ACF29072.1"/>
    <property type="molecule type" value="Genomic_DNA"/>
</dbReference>
<dbReference type="RefSeq" id="WP_003690726.1">
    <property type="nucleotide sequence ID" value="NC_011035.1"/>
</dbReference>
<dbReference type="SMR" id="B4RJR9"/>
<dbReference type="GeneID" id="66752581"/>
<dbReference type="KEGG" id="ngk:NGK_0379"/>
<dbReference type="HOGENOM" id="CLU_065038_1_0_4"/>
<dbReference type="UniPathway" id="UPA00030"/>
<dbReference type="UniPathway" id="UPA00358">
    <property type="reaction ID" value="UER00476"/>
</dbReference>
<dbReference type="Proteomes" id="UP000002564">
    <property type="component" value="Chromosome"/>
</dbReference>
<dbReference type="GO" id="GO:0005829">
    <property type="term" value="C:cytosol"/>
    <property type="evidence" value="ECO:0007669"/>
    <property type="project" value="TreeGrafter"/>
</dbReference>
<dbReference type="GO" id="GO:0008690">
    <property type="term" value="F:3-deoxy-manno-octulosonate cytidylyltransferase activity"/>
    <property type="evidence" value="ECO:0007669"/>
    <property type="project" value="UniProtKB-UniRule"/>
</dbReference>
<dbReference type="GO" id="GO:0033468">
    <property type="term" value="P:CMP-keto-3-deoxy-D-manno-octulosonic acid biosynthetic process"/>
    <property type="evidence" value="ECO:0007669"/>
    <property type="project" value="UniProtKB-UniRule"/>
</dbReference>
<dbReference type="GO" id="GO:0009103">
    <property type="term" value="P:lipopolysaccharide biosynthetic process"/>
    <property type="evidence" value="ECO:0007669"/>
    <property type="project" value="UniProtKB-UniRule"/>
</dbReference>
<dbReference type="CDD" id="cd02517">
    <property type="entry name" value="CMP-KDO-Synthetase"/>
    <property type="match status" value="1"/>
</dbReference>
<dbReference type="FunFam" id="3.90.550.10:FF:000011">
    <property type="entry name" value="3-deoxy-manno-octulosonate cytidylyltransferase"/>
    <property type="match status" value="1"/>
</dbReference>
<dbReference type="Gene3D" id="3.90.550.10">
    <property type="entry name" value="Spore Coat Polysaccharide Biosynthesis Protein SpsA, Chain A"/>
    <property type="match status" value="1"/>
</dbReference>
<dbReference type="HAMAP" id="MF_00057">
    <property type="entry name" value="KdsB"/>
    <property type="match status" value="1"/>
</dbReference>
<dbReference type="InterPro" id="IPR003329">
    <property type="entry name" value="Cytidylyl_trans"/>
</dbReference>
<dbReference type="InterPro" id="IPR004528">
    <property type="entry name" value="KdsB"/>
</dbReference>
<dbReference type="InterPro" id="IPR029044">
    <property type="entry name" value="Nucleotide-diphossugar_trans"/>
</dbReference>
<dbReference type="NCBIfam" id="TIGR00466">
    <property type="entry name" value="kdsB"/>
    <property type="match status" value="1"/>
</dbReference>
<dbReference type="NCBIfam" id="NF003952">
    <property type="entry name" value="PRK05450.1-5"/>
    <property type="match status" value="1"/>
</dbReference>
<dbReference type="NCBIfam" id="NF009905">
    <property type="entry name" value="PRK13368.1"/>
    <property type="match status" value="1"/>
</dbReference>
<dbReference type="PANTHER" id="PTHR42866">
    <property type="entry name" value="3-DEOXY-MANNO-OCTULOSONATE CYTIDYLYLTRANSFERASE"/>
    <property type="match status" value="1"/>
</dbReference>
<dbReference type="PANTHER" id="PTHR42866:SF2">
    <property type="entry name" value="3-DEOXY-MANNO-OCTULOSONATE CYTIDYLYLTRANSFERASE, MITOCHONDRIAL"/>
    <property type="match status" value="1"/>
</dbReference>
<dbReference type="Pfam" id="PF02348">
    <property type="entry name" value="CTP_transf_3"/>
    <property type="match status" value="1"/>
</dbReference>
<dbReference type="SUPFAM" id="SSF53448">
    <property type="entry name" value="Nucleotide-diphospho-sugar transferases"/>
    <property type="match status" value="1"/>
</dbReference>
<gene>
    <name evidence="1" type="primary">kdsB</name>
    <name type="ordered locus">NGK_0379</name>
</gene>
<name>KDSB_NEIG2</name>
<keyword id="KW-0963">Cytoplasm</keyword>
<keyword id="KW-0448">Lipopolysaccharide biosynthesis</keyword>
<keyword id="KW-0548">Nucleotidyltransferase</keyword>
<keyword id="KW-0808">Transferase</keyword>
<feature type="chain" id="PRO_0000370102" description="3-deoxy-manno-octulosonate cytidylyltransferase">
    <location>
        <begin position="1"/>
        <end position="253"/>
    </location>
</feature>